<gene>
    <name evidence="1" type="primary">ldh1</name>
    <name type="synonym">ldh</name>
    <name type="ordered locus">lin0242</name>
</gene>
<sequence>MKDHQKIILVGDGAVGSSYAFACVNLSIGQEFGIIDIDKDRTIGDAMDLSHAVPFSTPKKIYSANYSDCHDADLVVVTAGTAQKPGETRLDLVNRNIKIMKGIVDEVMASGFDGIFLIASNPVDILTYATWKFSGLPKERVIGSGTSLDTARFRMSIADYLKVDARNVHGYILGEHGDTQFPAWSHTTVGGLPITEWINEDEQGAMDTIFVSVRDAAYEIINKKGATFYGVAAALARITKAILNNENAILPLSVYLDGHYGMNDIYIGAPAVVNRQGVRHIVEMNLNDKEKEQMKNSADTLKKVLDDAMKQID</sequence>
<proteinExistence type="inferred from homology"/>
<protein>
    <recommendedName>
        <fullName evidence="1">L-lactate dehydrogenase 1</fullName>
        <shortName evidence="1">L-LDH 1</shortName>
        <ecNumber evidence="1">1.1.1.27</ecNumber>
    </recommendedName>
</protein>
<keyword id="KW-0021">Allosteric enzyme</keyword>
<keyword id="KW-0963">Cytoplasm</keyword>
<keyword id="KW-0520">NAD</keyword>
<keyword id="KW-0560">Oxidoreductase</keyword>
<keyword id="KW-0597">Phosphoprotein</keyword>
<dbReference type="EC" id="1.1.1.27" evidence="1"/>
<dbReference type="EMBL" id="AL596164">
    <property type="protein sequence ID" value="CAC95475.1"/>
    <property type="molecule type" value="Genomic_DNA"/>
</dbReference>
<dbReference type="EMBL" id="AF322004">
    <property type="protein sequence ID" value="AAL36598.1"/>
    <property type="molecule type" value="Genomic_DNA"/>
</dbReference>
<dbReference type="PIR" id="AC1463">
    <property type="entry name" value="AC1463"/>
</dbReference>
<dbReference type="RefSeq" id="WP_010990293.1">
    <property type="nucleotide sequence ID" value="NC_003212.1"/>
</dbReference>
<dbReference type="SMR" id="Q92F65"/>
<dbReference type="STRING" id="272626.gene:17564554"/>
<dbReference type="KEGG" id="lin:ldh"/>
<dbReference type="eggNOG" id="COG0039">
    <property type="taxonomic scope" value="Bacteria"/>
</dbReference>
<dbReference type="HOGENOM" id="CLU_045401_1_1_9"/>
<dbReference type="OrthoDB" id="9802969at2"/>
<dbReference type="UniPathway" id="UPA00554">
    <property type="reaction ID" value="UER00611"/>
</dbReference>
<dbReference type="Proteomes" id="UP000002513">
    <property type="component" value="Chromosome"/>
</dbReference>
<dbReference type="GO" id="GO:0005737">
    <property type="term" value="C:cytoplasm"/>
    <property type="evidence" value="ECO:0007669"/>
    <property type="project" value="UniProtKB-SubCell"/>
</dbReference>
<dbReference type="GO" id="GO:0004459">
    <property type="term" value="F:L-lactate dehydrogenase activity"/>
    <property type="evidence" value="ECO:0007669"/>
    <property type="project" value="UniProtKB-UniRule"/>
</dbReference>
<dbReference type="GO" id="GO:0006096">
    <property type="term" value="P:glycolytic process"/>
    <property type="evidence" value="ECO:0007669"/>
    <property type="project" value="UniProtKB-UniRule"/>
</dbReference>
<dbReference type="GO" id="GO:0006089">
    <property type="term" value="P:lactate metabolic process"/>
    <property type="evidence" value="ECO:0007669"/>
    <property type="project" value="TreeGrafter"/>
</dbReference>
<dbReference type="CDD" id="cd05291">
    <property type="entry name" value="HicDH_like"/>
    <property type="match status" value="1"/>
</dbReference>
<dbReference type="FunFam" id="3.40.50.720:FF:000018">
    <property type="entry name" value="Malate dehydrogenase"/>
    <property type="match status" value="1"/>
</dbReference>
<dbReference type="Gene3D" id="3.90.110.10">
    <property type="entry name" value="Lactate dehydrogenase/glycoside hydrolase, family 4, C-terminal"/>
    <property type="match status" value="1"/>
</dbReference>
<dbReference type="Gene3D" id="3.40.50.720">
    <property type="entry name" value="NAD(P)-binding Rossmann-like Domain"/>
    <property type="match status" value="1"/>
</dbReference>
<dbReference type="HAMAP" id="MF_00488">
    <property type="entry name" value="Lactate_dehydrog"/>
    <property type="match status" value="1"/>
</dbReference>
<dbReference type="InterPro" id="IPR001557">
    <property type="entry name" value="L-lactate/malate_DH"/>
</dbReference>
<dbReference type="InterPro" id="IPR011304">
    <property type="entry name" value="L-lactate_DH"/>
</dbReference>
<dbReference type="InterPro" id="IPR018177">
    <property type="entry name" value="L-lactate_DH_AS"/>
</dbReference>
<dbReference type="InterPro" id="IPR022383">
    <property type="entry name" value="Lactate/malate_DH_C"/>
</dbReference>
<dbReference type="InterPro" id="IPR001236">
    <property type="entry name" value="Lactate/malate_DH_N"/>
</dbReference>
<dbReference type="InterPro" id="IPR015955">
    <property type="entry name" value="Lactate_DH/Glyco_Ohase_4_C"/>
</dbReference>
<dbReference type="InterPro" id="IPR036291">
    <property type="entry name" value="NAD(P)-bd_dom_sf"/>
</dbReference>
<dbReference type="NCBIfam" id="TIGR01771">
    <property type="entry name" value="L-LDH-NAD"/>
    <property type="match status" value="1"/>
</dbReference>
<dbReference type="NCBIfam" id="NF000824">
    <property type="entry name" value="PRK00066.1"/>
    <property type="match status" value="1"/>
</dbReference>
<dbReference type="NCBIfam" id="NF004863">
    <property type="entry name" value="PRK06223.1"/>
    <property type="match status" value="1"/>
</dbReference>
<dbReference type="PANTHER" id="PTHR43128">
    <property type="entry name" value="L-2-HYDROXYCARBOXYLATE DEHYDROGENASE (NAD(P)(+))"/>
    <property type="match status" value="1"/>
</dbReference>
<dbReference type="PANTHER" id="PTHR43128:SF16">
    <property type="entry name" value="L-LACTATE DEHYDROGENASE"/>
    <property type="match status" value="1"/>
</dbReference>
<dbReference type="Pfam" id="PF02866">
    <property type="entry name" value="Ldh_1_C"/>
    <property type="match status" value="1"/>
</dbReference>
<dbReference type="Pfam" id="PF00056">
    <property type="entry name" value="Ldh_1_N"/>
    <property type="match status" value="1"/>
</dbReference>
<dbReference type="PIRSF" id="PIRSF000102">
    <property type="entry name" value="Lac_mal_DH"/>
    <property type="match status" value="1"/>
</dbReference>
<dbReference type="PRINTS" id="PR00086">
    <property type="entry name" value="LLDHDRGNASE"/>
</dbReference>
<dbReference type="SUPFAM" id="SSF56327">
    <property type="entry name" value="LDH C-terminal domain-like"/>
    <property type="match status" value="1"/>
</dbReference>
<dbReference type="SUPFAM" id="SSF51735">
    <property type="entry name" value="NAD(P)-binding Rossmann-fold domains"/>
    <property type="match status" value="1"/>
</dbReference>
<dbReference type="PROSITE" id="PS00064">
    <property type="entry name" value="L_LDH"/>
    <property type="match status" value="1"/>
</dbReference>
<organism>
    <name type="scientific">Listeria innocua serovar 6a (strain ATCC BAA-680 / CLIP 11262)</name>
    <dbReference type="NCBI Taxonomy" id="272626"/>
    <lineage>
        <taxon>Bacteria</taxon>
        <taxon>Bacillati</taxon>
        <taxon>Bacillota</taxon>
        <taxon>Bacilli</taxon>
        <taxon>Bacillales</taxon>
        <taxon>Listeriaceae</taxon>
        <taxon>Listeria</taxon>
    </lineage>
</organism>
<reference key="1">
    <citation type="journal article" date="2001" name="Science">
        <title>Comparative genomics of Listeria species.</title>
        <authorList>
            <person name="Glaser P."/>
            <person name="Frangeul L."/>
            <person name="Buchrieser C."/>
            <person name="Rusniok C."/>
            <person name="Amend A."/>
            <person name="Baquero F."/>
            <person name="Berche P."/>
            <person name="Bloecker H."/>
            <person name="Brandt P."/>
            <person name="Chakraborty T."/>
            <person name="Charbit A."/>
            <person name="Chetouani F."/>
            <person name="Couve E."/>
            <person name="de Daruvar A."/>
            <person name="Dehoux P."/>
            <person name="Domann E."/>
            <person name="Dominguez-Bernal G."/>
            <person name="Duchaud E."/>
            <person name="Durant L."/>
            <person name="Dussurget O."/>
            <person name="Entian K.-D."/>
            <person name="Fsihi H."/>
            <person name="Garcia-del Portillo F."/>
            <person name="Garrido P."/>
            <person name="Gautier L."/>
            <person name="Goebel W."/>
            <person name="Gomez-Lopez N."/>
            <person name="Hain T."/>
            <person name="Hauf J."/>
            <person name="Jackson D."/>
            <person name="Jones L.-M."/>
            <person name="Kaerst U."/>
            <person name="Kreft J."/>
            <person name="Kuhn M."/>
            <person name="Kunst F."/>
            <person name="Kurapkat G."/>
            <person name="Madueno E."/>
            <person name="Maitournam A."/>
            <person name="Mata Vicente J."/>
            <person name="Ng E."/>
            <person name="Nedjari H."/>
            <person name="Nordsiek G."/>
            <person name="Novella S."/>
            <person name="de Pablos B."/>
            <person name="Perez-Diaz J.-C."/>
            <person name="Purcell R."/>
            <person name="Remmel B."/>
            <person name="Rose M."/>
            <person name="Schlueter T."/>
            <person name="Simoes N."/>
            <person name="Tierrez A."/>
            <person name="Vazquez-Boland J.-A."/>
            <person name="Voss H."/>
            <person name="Wehland J."/>
            <person name="Cossart P."/>
        </authorList>
    </citation>
    <scope>NUCLEOTIDE SEQUENCE [LARGE SCALE GENOMIC DNA]</scope>
    <source>
        <strain>ATCC BAA-680 / CLIP 11262</strain>
    </source>
</reference>
<reference key="2">
    <citation type="journal article" date="2001" name="Curr. Microbiol.">
        <title>Characterization of the prfA virulence gene cluster insertion site in non-hemolytic Listeria spp.: probing the evolution of the Listeria virulence gene island.</title>
        <authorList>
            <person name="Cai S."/>
            <person name="Wiedmann M."/>
        </authorList>
    </citation>
    <scope>NUCLEOTIDE SEQUENCE [GENOMIC DNA] OF 223-313</scope>
    <source>
        <strain>dd644</strain>
    </source>
</reference>
<name>LDH1_LISIN</name>
<feature type="chain" id="PRO_0000168361" description="L-lactate dehydrogenase 1">
    <location>
        <begin position="1"/>
        <end position="313"/>
    </location>
</feature>
<feature type="active site" description="Proton acceptor" evidence="1">
    <location>
        <position position="176"/>
    </location>
</feature>
<feature type="binding site" evidence="1">
    <location>
        <position position="15"/>
    </location>
    <ligand>
        <name>NAD(+)</name>
        <dbReference type="ChEBI" id="CHEBI:57540"/>
    </ligand>
</feature>
<feature type="binding site" evidence="1">
    <location>
        <position position="36"/>
    </location>
    <ligand>
        <name>NAD(+)</name>
        <dbReference type="ChEBI" id="CHEBI:57540"/>
    </ligand>
</feature>
<feature type="binding site" evidence="1">
    <location>
        <position position="41"/>
    </location>
    <ligand>
        <name>NAD(+)</name>
        <dbReference type="ChEBI" id="CHEBI:57540"/>
    </ligand>
</feature>
<feature type="binding site" evidence="1">
    <location>
        <position position="66"/>
    </location>
    <ligand>
        <name>NAD(+)</name>
        <dbReference type="ChEBI" id="CHEBI:57540"/>
    </ligand>
</feature>
<feature type="binding site" evidence="1">
    <location>
        <position position="83"/>
    </location>
    <ligand>
        <name>substrate</name>
    </ligand>
</feature>
<feature type="binding site" evidence="1">
    <location>
        <position position="89"/>
    </location>
    <ligand>
        <name>substrate</name>
    </ligand>
</feature>
<feature type="binding site" evidence="1">
    <location>
        <begin position="119"/>
        <end position="121"/>
    </location>
    <ligand>
        <name>NAD(+)</name>
        <dbReference type="ChEBI" id="CHEBI:57540"/>
    </ligand>
</feature>
<feature type="binding site" evidence="1">
    <location>
        <begin position="121"/>
        <end position="124"/>
    </location>
    <ligand>
        <name>substrate</name>
    </ligand>
</feature>
<feature type="binding site" evidence="1">
    <location>
        <position position="144"/>
    </location>
    <ligand>
        <name>NAD(+)</name>
        <dbReference type="ChEBI" id="CHEBI:57540"/>
    </ligand>
</feature>
<feature type="binding site" evidence="1">
    <location>
        <begin position="149"/>
        <end position="152"/>
    </location>
    <ligand>
        <name>substrate</name>
    </ligand>
</feature>
<feature type="binding site" evidence="1">
    <location>
        <position position="154"/>
    </location>
    <ligand>
        <name>beta-D-fructose 1,6-bisphosphate</name>
        <dbReference type="ChEBI" id="CHEBI:32966"/>
        <note>allosteric activator</note>
    </ligand>
</feature>
<feature type="binding site" evidence="1">
    <location>
        <position position="169"/>
    </location>
    <ligand>
        <name>beta-D-fructose 1,6-bisphosphate</name>
        <dbReference type="ChEBI" id="CHEBI:32966"/>
        <note>allosteric activator</note>
    </ligand>
</feature>
<feature type="binding site" evidence="1">
    <location>
        <position position="227"/>
    </location>
    <ligand>
        <name>substrate</name>
    </ligand>
</feature>
<feature type="modified residue" description="Phosphotyrosine" evidence="1">
    <location>
        <position position="218"/>
    </location>
</feature>
<feature type="sequence conflict" description="In Ref. 2; AAL36598." evidence="2" ref="2">
    <original>K</original>
    <variation>L</variation>
    <location>
        <position position="223"/>
    </location>
</feature>
<evidence type="ECO:0000255" key="1">
    <source>
        <dbReference type="HAMAP-Rule" id="MF_00488"/>
    </source>
</evidence>
<evidence type="ECO:0000305" key="2"/>
<accession>Q92F65</accession>
<accession>Q8VTS6</accession>
<comment type="function">
    <text evidence="1">Catalyzes the conversion of lactate to pyruvate.</text>
</comment>
<comment type="catalytic activity">
    <reaction evidence="1">
        <text>(S)-lactate + NAD(+) = pyruvate + NADH + H(+)</text>
        <dbReference type="Rhea" id="RHEA:23444"/>
        <dbReference type="ChEBI" id="CHEBI:15361"/>
        <dbReference type="ChEBI" id="CHEBI:15378"/>
        <dbReference type="ChEBI" id="CHEBI:16651"/>
        <dbReference type="ChEBI" id="CHEBI:57540"/>
        <dbReference type="ChEBI" id="CHEBI:57945"/>
        <dbReference type="EC" id="1.1.1.27"/>
    </reaction>
</comment>
<comment type="activity regulation">
    <text evidence="1">Allosterically activated by fructose 1,6-bisphosphate (FBP).</text>
</comment>
<comment type="pathway">
    <text evidence="1">Fermentation; pyruvate fermentation to lactate; (S)-lactate from pyruvate: step 1/1.</text>
</comment>
<comment type="subunit">
    <text evidence="1">Homotetramer.</text>
</comment>
<comment type="subcellular location">
    <subcellularLocation>
        <location evidence="1">Cytoplasm</location>
    </subcellularLocation>
</comment>
<comment type="similarity">
    <text evidence="1 2">Belongs to the LDH/MDH superfamily. LDH family.</text>
</comment>